<name>SYP_BUCAP</name>
<dbReference type="EC" id="6.1.1.15" evidence="1"/>
<dbReference type="EMBL" id="AE013218">
    <property type="protein sequence ID" value="AAM67793.1"/>
    <property type="molecule type" value="Genomic_DNA"/>
</dbReference>
<dbReference type="RefSeq" id="WP_011053760.1">
    <property type="nucleotide sequence ID" value="NC_004061.1"/>
</dbReference>
<dbReference type="SMR" id="Q8K9S2"/>
<dbReference type="STRING" id="198804.BUsg_234"/>
<dbReference type="GeneID" id="93003700"/>
<dbReference type="KEGG" id="bas:BUsg_234"/>
<dbReference type="eggNOG" id="COG0442">
    <property type="taxonomic scope" value="Bacteria"/>
</dbReference>
<dbReference type="HOGENOM" id="CLU_016739_0_0_6"/>
<dbReference type="Proteomes" id="UP000000416">
    <property type="component" value="Chromosome"/>
</dbReference>
<dbReference type="GO" id="GO:0005829">
    <property type="term" value="C:cytosol"/>
    <property type="evidence" value="ECO:0007669"/>
    <property type="project" value="TreeGrafter"/>
</dbReference>
<dbReference type="GO" id="GO:0002161">
    <property type="term" value="F:aminoacyl-tRNA deacylase activity"/>
    <property type="evidence" value="ECO:0007669"/>
    <property type="project" value="InterPro"/>
</dbReference>
<dbReference type="GO" id="GO:0005524">
    <property type="term" value="F:ATP binding"/>
    <property type="evidence" value="ECO:0007669"/>
    <property type="project" value="UniProtKB-UniRule"/>
</dbReference>
<dbReference type="GO" id="GO:0004827">
    <property type="term" value="F:proline-tRNA ligase activity"/>
    <property type="evidence" value="ECO:0007669"/>
    <property type="project" value="UniProtKB-UniRule"/>
</dbReference>
<dbReference type="GO" id="GO:0006433">
    <property type="term" value="P:prolyl-tRNA aminoacylation"/>
    <property type="evidence" value="ECO:0007669"/>
    <property type="project" value="UniProtKB-UniRule"/>
</dbReference>
<dbReference type="CDD" id="cd04334">
    <property type="entry name" value="ProRS-INS"/>
    <property type="match status" value="1"/>
</dbReference>
<dbReference type="CDD" id="cd00861">
    <property type="entry name" value="ProRS_anticodon_short"/>
    <property type="match status" value="1"/>
</dbReference>
<dbReference type="CDD" id="cd00779">
    <property type="entry name" value="ProRS_core_prok"/>
    <property type="match status" value="1"/>
</dbReference>
<dbReference type="Gene3D" id="3.40.50.800">
    <property type="entry name" value="Anticodon-binding domain"/>
    <property type="match status" value="1"/>
</dbReference>
<dbReference type="Gene3D" id="3.30.930.10">
    <property type="entry name" value="Bira Bifunctional Protein, Domain 2"/>
    <property type="match status" value="2"/>
</dbReference>
<dbReference type="HAMAP" id="MF_01569">
    <property type="entry name" value="Pro_tRNA_synth_type1"/>
    <property type="match status" value="1"/>
</dbReference>
<dbReference type="InterPro" id="IPR002314">
    <property type="entry name" value="aa-tRNA-synt_IIb"/>
</dbReference>
<dbReference type="InterPro" id="IPR006195">
    <property type="entry name" value="aa-tRNA-synth_II"/>
</dbReference>
<dbReference type="InterPro" id="IPR045864">
    <property type="entry name" value="aa-tRNA-synth_II/BPL/LPL"/>
</dbReference>
<dbReference type="InterPro" id="IPR004154">
    <property type="entry name" value="Anticodon-bd"/>
</dbReference>
<dbReference type="InterPro" id="IPR036621">
    <property type="entry name" value="Anticodon-bd_dom_sf"/>
</dbReference>
<dbReference type="InterPro" id="IPR002316">
    <property type="entry name" value="Pro-tRNA-ligase_IIa"/>
</dbReference>
<dbReference type="InterPro" id="IPR004500">
    <property type="entry name" value="Pro-tRNA-synth_IIa_bac-type"/>
</dbReference>
<dbReference type="InterPro" id="IPR023717">
    <property type="entry name" value="Pro-tRNA-Synthase_IIa_type1"/>
</dbReference>
<dbReference type="InterPro" id="IPR050062">
    <property type="entry name" value="Pro-tRNA_synthetase"/>
</dbReference>
<dbReference type="InterPro" id="IPR044140">
    <property type="entry name" value="ProRS_anticodon_short"/>
</dbReference>
<dbReference type="InterPro" id="IPR033730">
    <property type="entry name" value="ProRS_core_prok"/>
</dbReference>
<dbReference type="InterPro" id="IPR036754">
    <property type="entry name" value="YbaK/aa-tRNA-synt-asso_dom_sf"/>
</dbReference>
<dbReference type="InterPro" id="IPR007214">
    <property type="entry name" value="YbaK/aa-tRNA-synth-assoc-dom"/>
</dbReference>
<dbReference type="NCBIfam" id="NF006625">
    <property type="entry name" value="PRK09194.1"/>
    <property type="match status" value="1"/>
</dbReference>
<dbReference type="NCBIfam" id="TIGR00409">
    <property type="entry name" value="proS_fam_II"/>
    <property type="match status" value="1"/>
</dbReference>
<dbReference type="PANTHER" id="PTHR42753">
    <property type="entry name" value="MITOCHONDRIAL RIBOSOME PROTEIN L39/PROLYL-TRNA LIGASE FAMILY MEMBER"/>
    <property type="match status" value="1"/>
</dbReference>
<dbReference type="PANTHER" id="PTHR42753:SF2">
    <property type="entry name" value="PROLINE--TRNA LIGASE"/>
    <property type="match status" value="1"/>
</dbReference>
<dbReference type="Pfam" id="PF03129">
    <property type="entry name" value="HGTP_anticodon"/>
    <property type="match status" value="1"/>
</dbReference>
<dbReference type="Pfam" id="PF00587">
    <property type="entry name" value="tRNA-synt_2b"/>
    <property type="match status" value="1"/>
</dbReference>
<dbReference type="Pfam" id="PF04073">
    <property type="entry name" value="tRNA_edit"/>
    <property type="match status" value="1"/>
</dbReference>
<dbReference type="PRINTS" id="PR01046">
    <property type="entry name" value="TRNASYNTHPRO"/>
</dbReference>
<dbReference type="SUPFAM" id="SSF52954">
    <property type="entry name" value="Class II aaRS ABD-related"/>
    <property type="match status" value="1"/>
</dbReference>
<dbReference type="SUPFAM" id="SSF55681">
    <property type="entry name" value="Class II aaRS and biotin synthetases"/>
    <property type="match status" value="1"/>
</dbReference>
<dbReference type="SUPFAM" id="SSF55826">
    <property type="entry name" value="YbaK/ProRS associated domain"/>
    <property type="match status" value="1"/>
</dbReference>
<dbReference type="PROSITE" id="PS50862">
    <property type="entry name" value="AA_TRNA_LIGASE_II"/>
    <property type="match status" value="1"/>
</dbReference>
<reference key="1">
    <citation type="journal article" date="2002" name="Science">
        <title>50 million years of genomic stasis in endosymbiotic bacteria.</title>
        <authorList>
            <person name="Tamas I."/>
            <person name="Klasson L."/>
            <person name="Canbaeck B."/>
            <person name="Naeslund A.K."/>
            <person name="Eriksson A.-S."/>
            <person name="Wernegreen J.J."/>
            <person name="Sandstroem J.P."/>
            <person name="Moran N.A."/>
            <person name="Andersson S.G.E."/>
        </authorList>
    </citation>
    <scope>NUCLEOTIDE SEQUENCE [LARGE SCALE GENOMIC DNA]</scope>
    <source>
        <strain>Sg</strain>
    </source>
</reference>
<protein>
    <recommendedName>
        <fullName evidence="1">Proline--tRNA ligase</fullName>
        <ecNumber evidence="1">6.1.1.15</ecNumber>
    </recommendedName>
    <alternativeName>
        <fullName evidence="1">Prolyl-tRNA synthetase</fullName>
        <shortName evidence="1">ProRS</shortName>
    </alternativeName>
</protein>
<evidence type="ECO:0000255" key="1">
    <source>
        <dbReference type="HAMAP-Rule" id="MF_01569"/>
    </source>
</evidence>
<feature type="chain" id="PRO_0000139323" description="Proline--tRNA ligase">
    <location>
        <begin position="1"/>
        <end position="571"/>
    </location>
</feature>
<organism>
    <name type="scientific">Buchnera aphidicola subsp. Schizaphis graminum (strain Sg)</name>
    <dbReference type="NCBI Taxonomy" id="198804"/>
    <lineage>
        <taxon>Bacteria</taxon>
        <taxon>Pseudomonadati</taxon>
        <taxon>Pseudomonadota</taxon>
        <taxon>Gammaproteobacteria</taxon>
        <taxon>Enterobacterales</taxon>
        <taxon>Erwiniaceae</taxon>
        <taxon>Buchnera</taxon>
    </lineage>
</organism>
<gene>
    <name evidence="1" type="primary">proS</name>
    <name type="ordered locus">BUsg_234</name>
</gene>
<accession>Q8K9S2</accession>
<sequence>MRASKYLFSTLKETPHHAKIISHQLMLKSGMIRKLSSGIYIWLPTGIRVLNKIKDIIKNEMRKINALEVLMPVVQPKKLWENSGRLSIYGEELFQFYDRRNQKFILGPTNEEVVTNFIRNEINSFKELPLIIYQIQTKFRDEIRPRFGIVRSREFIMKDAYSFHINKHCLEKTYNDFYQSYINIFNKIKIQFRAVNADSGSMGGSISHEFQALSENGEDEIVFSKNTAYASNINTAKSMQSINFLKEKNRIIPNQIKSKKCTKNFNEFKKPIKNFIKTILVRTKINNQPSLAALLIRQEHELNLFKIEEIDIIEKPLSFVNEEEIITLMGVKSKFLGPLGLKIPIFADVSVYYMKDFTIGSNINEKFFINVNWNVDLPIPIIKDIRNITKKDISSDGSKSLEIKKSIEIGHIFQLGKEYSKKMNVLVQEQHNNYKHIHMGCYGIGITRIVASVIEQNYDDNGIIWPDSIAPFQVVILPLNTKNCIKIKEITENLYKILKKEKIDVILYDRNERPGIMFNQIDLIGIPHQIIISPRHINENKVEYRERKNNKSTLIKVKEITYFLKKKLNLI</sequence>
<comment type="function">
    <text evidence="1">Catalyzes the attachment of proline to tRNA(Pro) in a two-step reaction: proline is first activated by ATP to form Pro-AMP and then transferred to the acceptor end of tRNA(Pro). As ProRS can inadvertently accommodate and process non-cognate amino acids such as alanine and cysteine, to avoid such errors it has two additional distinct editing activities against alanine. One activity is designated as 'pretransfer' editing and involves the tRNA(Pro)-independent hydrolysis of activated Ala-AMP. The other activity is designated 'posttransfer' editing and involves deacylation of mischarged Ala-tRNA(Pro). The misacylated Cys-tRNA(Pro) is not edited by ProRS.</text>
</comment>
<comment type="catalytic activity">
    <reaction evidence="1">
        <text>tRNA(Pro) + L-proline + ATP = L-prolyl-tRNA(Pro) + AMP + diphosphate</text>
        <dbReference type="Rhea" id="RHEA:14305"/>
        <dbReference type="Rhea" id="RHEA-COMP:9700"/>
        <dbReference type="Rhea" id="RHEA-COMP:9702"/>
        <dbReference type="ChEBI" id="CHEBI:30616"/>
        <dbReference type="ChEBI" id="CHEBI:33019"/>
        <dbReference type="ChEBI" id="CHEBI:60039"/>
        <dbReference type="ChEBI" id="CHEBI:78442"/>
        <dbReference type="ChEBI" id="CHEBI:78532"/>
        <dbReference type="ChEBI" id="CHEBI:456215"/>
        <dbReference type="EC" id="6.1.1.15"/>
    </reaction>
</comment>
<comment type="subunit">
    <text evidence="1">Homodimer.</text>
</comment>
<comment type="subcellular location">
    <subcellularLocation>
        <location evidence="1">Cytoplasm</location>
    </subcellularLocation>
</comment>
<comment type="domain">
    <text evidence="1">Consists of three domains: the N-terminal catalytic domain, the editing domain and the C-terminal anticodon-binding domain.</text>
</comment>
<comment type="similarity">
    <text evidence="1">Belongs to the class-II aminoacyl-tRNA synthetase family. ProS type 1 subfamily.</text>
</comment>
<keyword id="KW-0030">Aminoacyl-tRNA synthetase</keyword>
<keyword id="KW-0067">ATP-binding</keyword>
<keyword id="KW-0963">Cytoplasm</keyword>
<keyword id="KW-0436">Ligase</keyword>
<keyword id="KW-0547">Nucleotide-binding</keyword>
<keyword id="KW-0648">Protein biosynthesis</keyword>
<proteinExistence type="inferred from homology"/>